<feature type="chain" id="PRO_0000280125" description="Neuraminidase">
    <location>
        <begin position="1"/>
        <end position="469"/>
    </location>
</feature>
<feature type="topological domain" description="Intravirion" evidence="1">
    <location>
        <begin position="1"/>
        <end position="6"/>
    </location>
</feature>
<feature type="transmembrane region" description="Helical" evidence="1">
    <location>
        <begin position="7"/>
        <end position="27"/>
    </location>
</feature>
<feature type="topological domain" description="Virion surface" evidence="1">
    <location>
        <begin position="28"/>
        <end position="469"/>
    </location>
</feature>
<feature type="region of interest" description="Involved in apical transport and lipid raft association" evidence="1">
    <location>
        <begin position="11"/>
        <end position="33"/>
    </location>
</feature>
<feature type="region of interest" description="Hypervariable stalk region" evidence="1">
    <location>
        <begin position="36"/>
        <end position="90"/>
    </location>
</feature>
<feature type="region of interest" description="Head of neuraminidase" evidence="1">
    <location>
        <begin position="91"/>
        <end position="469"/>
    </location>
</feature>
<feature type="active site" description="Proton donor/acceptor" evidence="1">
    <location>
        <position position="151"/>
    </location>
</feature>
<feature type="active site" description="Nucleophile" evidence="1">
    <location>
        <position position="402"/>
    </location>
</feature>
<feature type="binding site" evidence="1">
    <location>
        <position position="118"/>
    </location>
    <ligand>
        <name>substrate</name>
    </ligand>
</feature>
<feature type="binding site" evidence="1">
    <location>
        <position position="152"/>
    </location>
    <ligand>
        <name>substrate</name>
    </ligand>
</feature>
<feature type="binding site" evidence="1">
    <location>
        <begin position="277"/>
        <end position="278"/>
    </location>
    <ligand>
        <name>substrate</name>
    </ligand>
</feature>
<feature type="binding site" evidence="1">
    <location>
        <position position="293"/>
    </location>
    <ligand>
        <name>substrate</name>
    </ligand>
</feature>
<feature type="binding site" evidence="1">
    <location>
        <position position="294"/>
    </location>
    <ligand>
        <name>Ca(2+)</name>
        <dbReference type="ChEBI" id="CHEBI:29108"/>
    </ligand>
</feature>
<feature type="binding site" evidence="1">
    <location>
        <position position="298"/>
    </location>
    <ligand>
        <name>Ca(2+)</name>
        <dbReference type="ChEBI" id="CHEBI:29108"/>
    </ligand>
</feature>
<feature type="binding site" evidence="1">
    <location>
        <position position="324"/>
    </location>
    <ligand>
        <name>Ca(2+)</name>
        <dbReference type="ChEBI" id="CHEBI:29108"/>
    </ligand>
</feature>
<feature type="binding site" evidence="1">
    <location>
        <position position="368"/>
    </location>
    <ligand>
        <name>substrate</name>
    </ligand>
</feature>
<feature type="glycosylation site" description="N-linked (GlcNAc...) asparagine; by host" evidence="1">
    <location>
        <position position="50"/>
    </location>
</feature>
<feature type="glycosylation site" description="N-linked (GlcNAc...) asparagine; by host" evidence="1">
    <location>
        <position position="58"/>
    </location>
</feature>
<feature type="glycosylation site" description="N-linked (GlcNAc...) asparagine; by host" evidence="1">
    <location>
        <position position="63"/>
    </location>
</feature>
<feature type="glycosylation site" description="N-linked (GlcNAc...) asparagine; by host" evidence="1">
    <location>
        <position position="68"/>
    </location>
</feature>
<feature type="glycosylation site" description="N-linked (GlcNAc...) asparagine; by host" evidence="1">
    <location>
        <position position="88"/>
    </location>
</feature>
<feature type="glycosylation site" description="N-linked (GlcNAc...) asparagine; by host" evidence="1">
    <location>
        <position position="146"/>
    </location>
</feature>
<feature type="glycosylation site" description="N-linked (GlcNAc...) asparagine; by host" evidence="1">
    <location>
        <position position="235"/>
    </location>
</feature>
<feature type="disulfide bond" evidence="1">
    <location>
        <begin position="92"/>
        <end position="417"/>
    </location>
</feature>
<feature type="disulfide bond" evidence="1">
    <location>
        <begin position="124"/>
        <end position="129"/>
    </location>
</feature>
<feature type="disulfide bond" evidence="1">
    <location>
        <begin position="184"/>
        <end position="231"/>
    </location>
</feature>
<feature type="disulfide bond" evidence="1">
    <location>
        <begin position="233"/>
        <end position="238"/>
    </location>
</feature>
<feature type="disulfide bond" evidence="1">
    <location>
        <begin position="279"/>
        <end position="292"/>
    </location>
</feature>
<feature type="disulfide bond" evidence="1">
    <location>
        <begin position="281"/>
        <end position="290"/>
    </location>
</feature>
<feature type="disulfide bond" evidence="1">
    <location>
        <begin position="318"/>
        <end position="335"/>
    </location>
</feature>
<feature type="disulfide bond" evidence="1">
    <location>
        <begin position="421"/>
        <end position="446"/>
    </location>
</feature>
<keyword id="KW-0106">Calcium</keyword>
<keyword id="KW-1015">Disulfide bond</keyword>
<keyword id="KW-0325">Glycoprotein</keyword>
<keyword id="KW-0326">Glycosidase</keyword>
<keyword id="KW-1032">Host cell membrane</keyword>
<keyword id="KW-1043">Host membrane</keyword>
<keyword id="KW-0378">Hydrolase</keyword>
<keyword id="KW-0472">Membrane</keyword>
<keyword id="KW-0479">Metal-binding</keyword>
<keyword id="KW-0735">Signal-anchor</keyword>
<keyword id="KW-0812">Transmembrane</keyword>
<keyword id="KW-1133">Transmembrane helix</keyword>
<keyword id="KW-0946">Virion</keyword>
<organism>
    <name type="scientific">Influenza A virus (strain A/Chicken/Scotland/1959 H5N1)</name>
    <dbReference type="NCBI Taxonomy" id="402527"/>
    <lineage>
        <taxon>Viruses</taxon>
        <taxon>Riboviria</taxon>
        <taxon>Orthornavirae</taxon>
        <taxon>Negarnaviricota</taxon>
        <taxon>Polyploviricotina</taxon>
        <taxon>Insthoviricetes</taxon>
        <taxon>Articulavirales</taxon>
        <taxon>Orthomyxoviridae</taxon>
        <taxon>Alphainfluenzavirus</taxon>
        <taxon>Alphainfluenzavirus influenzae</taxon>
        <taxon>Influenza A virus</taxon>
    </lineage>
</organism>
<dbReference type="EC" id="3.2.1.18" evidence="1"/>
<dbReference type="EMBL" id="AJ416625">
    <property type="protein sequence ID" value="CAC95053.1"/>
    <property type="molecule type" value="mRNA"/>
</dbReference>
<dbReference type="EMBL" id="CY015083">
    <property type="protein sequence ID" value="ABI85109.1"/>
    <property type="molecule type" value="Genomic_RNA"/>
</dbReference>
<dbReference type="SMR" id="Q710U6"/>
<dbReference type="CAZy" id="GH34">
    <property type="family name" value="Glycoside Hydrolase Family 34"/>
</dbReference>
<dbReference type="GlyCosmos" id="Q710U6">
    <property type="glycosylation" value="7 sites, No reported glycans"/>
</dbReference>
<dbReference type="SABIO-RK" id="Q710U6"/>
<dbReference type="PRO" id="PR:Q710U6"/>
<dbReference type="Proteomes" id="UP000169634">
    <property type="component" value="Genome"/>
</dbReference>
<dbReference type="GO" id="GO:0020002">
    <property type="term" value="C:host cell plasma membrane"/>
    <property type="evidence" value="ECO:0007669"/>
    <property type="project" value="UniProtKB-SubCell"/>
</dbReference>
<dbReference type="GO" id="GO:0016020">
    <property type="term" value="C:membrane"/>
    <property type="evidence" value="ECO:0007669"/>
    <property type="project" value="UniProtKB-UniRule"/>
</dbReference>
<dbReference type="GO" id="GO:0055036">
    <property type="term" value="C:virion membrane"/>
    <property type="evidence" value="ECO:0007669"/>
    <property type="project" value="UniProtKB-SubCell"/>
</dbReference>
<dbReference type="GO" id="GO:0004308">
    <property type="term" value="F:exo-alpha-sialidase activity"/>
    <property type="evidence" value="ECO:0007669"/>
    <property type="project" value="UniProtKB-UniRule"/>
</dbReference>
<dbReference type="GO" id="GO:0046872">
    <property type="term" value="F:metal ion binding"/>
    <property type="evidence" value="ECO:0007669"/>
    <property type="project" value="UniProtKB-UniRule"/>
</dbReference>
<dbReference type="GO" id="GO:0005975">
    <property type="term" value="P:carbohydrate metabolic process"/>
    <property type="evidence" value="ECO:0007669"/>
    <property type="project" value="InterPro"/>
</dbReference>
<dbReference type="GO" id="GO:0046761">
    <property type="term" value="P:viral budding from plasma membrane"/>
    <property type="evidence" value="ECO:0007669"/>
    <property type="project" value="UniProtKB-UniRule"/>
</dbReference>
<dbReference type="CDD" id="cd15483">
    <property type="entry name" value="Influenza_NA"/>
    <property type="match status" value="1"/>
</dbReference>
<dbReference type="FunFam" id="2.120.10.10:FF:000001">
    <property type="entry name" value="Neuraminidase"/>
    <property type="match status" value="1"/>
</dbReference>
<dbReference type="Gene3D" id="2.120.10.10">
    <property type="match status" value="1"/>
</dbReference>
<dbReference type="HAMAP" id="MF_04071">
    <property type="entry name" value="INFV_NRAM"/>
    <property type="match status" value="1"/>
</dbReference>
<dbReference type="InterPro" id="IPR001860">
    <property type="entry name" value="Glyco_hydro_34"/>
</dbReference>
<dbReference type="InterPro" id="IPR033654">
    <property type="entry name" value="Sialidase_Influenza_A/B"/>
</dbReference>
<dbReference type="InterPro" id="IPR036278">
    <property type="entry name" value="Sialidase_sf"/>
</dbReference>
<dbReference type="Pfam" id="PF00064">
    <property type="entry name" value="Neur"/>
    <property type="match status" value="1"/>
</dbReference>
<dbReference type="SUPFAM" id="SSF50939">
    <property type="entry name" value="Sialidases"/>
    <property type="match status" value="1"/>
</dbReference>
<evidence type="ECO:0000255" key="1">
    <source>
        <dbReference type="HAMAP-Rule" id="MF_04071"/>
    </source>
</evidence>
<organismHost>
    <name type="scientific">Aves</name>
    <dbReference type="NCBI Taxonomy" id="8782"/>
</organismHost>
<organismHost>
    <name type="scientific">Felis catus</name>
    <name type="common">Cat</name>
    <name type="synonym">Felis silvestris catus</name>
    <dbReference type="NCBI Taxonomy" id="9685"/>
</organismHost>
<organismHost>
    <name type="scientific">Homo sapiens</name>
    <name type="common">Human</name>
    <dbReference type="NCBI Taxonomy" id="9606"/>
</organismHost>
<organismHost>
    <name type="scientific">Panthera pardus</name>
    <name type="common">Leopard</name>
    <name type="synonym">Felis pardus</name>
    <dbReference type="NCBI Taxonomy" id="9691"/>
</organismHost>
<organismHost>
    <name type="scientific">Panthera tigris</name>
    <name type="common">Tiger</name>
    <dbReference type="NCBI Taxonomy" id="9694"/>
</organismHost>
<organismHost>
    <name type="scientific">Sus scrofa</name>
    <name type="common">Pig</name>
    <dbReference type="NCBI Taxonomy" id="9823"/>
</organismHost>
<sequence>MNPNQKIITIGSICMIVGIISLILQIGNIISIWVSHSIQTGNQNQPEICNQSIITYENNTWVNQTYVNISNTNFVTEQALAPVALAGNSSLCPISGWAIYSKDNGIRIGSKGDVFVIREPFISCSHLECRTFFLTQGALLNDKHSNGTVKDRSPYRTLMSCPIGESPSPYNSRFESVAWSASACHDGIGWLTIGISGPDNGAVAVLKYNGIITDTIKSWRNNILRTQESECACMNGSCFTIMTDGPSNGQASYKIFKIEKGKVVKSVELNAPNYHYEECSCYPDAGEIMCVCRDNWHGSNRPWVSFNQNLEYQIGYICSGVFGDNPRPNDGAGSCGPVSSNGAYGVKGFSFKYGKGVWIGRTKSTSSRSGFEMIWDPNGWTETDSSFSVKQDIVAITDWSGYSGSFVQHPELTGLDCMRPCFWVELIRGRPKENTIWTSGSSISFCGVNSDTVGWSWPDGAELPFTIDK</sequence>
<protein>
    <recommendedName>
        <fullName evidence="1">Neuraminidase</fullName>
        <ecNumber evidence="1">3.2.1.18</ecNumber>
    </recommendedName>
</protein>
<gene>
    <name evidence="1" type="primary">NA</name>
</gene>
<comment type="function">
    <text evidence="1">Catalyzes the removal of terminal sialic acid residues from viral and cellular glycoconjugates. Cleaves off the terminal sialic acids on the glycosylated HA during virus budding to facilitate virus release. Additionally helps virus spread through the circulation by further removing sialic acids from the cell surface. These cleavages prevent self-aggregation and ensure the efficient spread of the progeny virus from cell to cell. Otherwise, infection would be limited to one round of replication. Described as a receptor-destroying enzyme because it cleaves a terminal sialic acid from the cellular receptors. May facilitate viral invasion of the upper airways by cleaving the sialic acid moieties on the mucin of the airway epithelial cells. Likely to plays a role in the budding process through its association with lipid rafts during intracellular transport. May additionally display a raft-association independent effect on budding. Plays a role in the determination of host range restriction on replication and virulence. Sialidase activity in late endosome/lysosome traffic seems to enhance virus replication.</text>
</comment>
<comment type="catalytic activity">
    <reaction evidence="1">
        <text>Hydrolysis of alpha-(2-&gt;3)-, alpha-(2-&gt;6)-, alpha-(2-&gt;8)- glycosidic linkages of terminal sialic acid residues in oligosaccharides, glycoproteins, glycolipids, colominic acid and synthetic substrates.</text>
        <dbReference type="EC" id="3.2.1.18"/>
    </reaction>
</comment>
<comment type="cofactor">
    <cofactor evidence="1">
        <name>Ca(2+)</name>
        <dbReference type="ChEBI" id="CHEBI:29108"/>
    </cofactor>
</comment>
<comment type="activity regulation">
    <text evidence="1">Inhibited by the neuraminidase inhibitors zanamivir (Relenza) and oseltamivir (Tamiflu). These drugs interfere with the release of progeny virus from infected cells and are effective against all influenza strains. Resistance to neuraminidase inhibitors is quite rare.</text>
</comment>
<comment type="subunit">
    <text evidence="1">Homotetramer.</text>
</comment>
<comment type="subcellular location">
    <subcellularLocation>
        <location evidence="1">Virion membrane</location>
    </subcellularLocation>
    <subcellularLocation>
        <location evidence="1">Host apical cell membrane</location>
        <topology evidence="1">Single-pass type II membrane protein</topology>
    </subcellularLocation>
    <text evidence="1">Preferentially accumulates at the apical plasma membrane in infected polarized epithelial cells, which is the virus assembly site. Uses lipid rafts for cell surface transport and apical sorting. In the virion, forms a mushroom-shaped spike on the surface of the membrane.</text>
</comment>
<comment type="domain">
    <text evidence="1">Intact N-terminus is essential for virion morphogenesis. Possesses two apical sorting signals, one in the ectodomain, which is likely to be a glycan, and the other in the transmembrane domain. The transmembrane domain also plays a role in lipid raft association.</text>
</comment>
<comment type="PTM">
    <text evidence="1">N-glycosylated.</text>
</comment>
<comment type="miscellaneous">
    <text>The influenza A genome consist of 8 RNA segments. Genetic variation of hemagglutinin and/or neuraminidase genes results in the emergence of new influenza strains. The mechanism of variation can be the result of point mutations or the result of genetic reassortment between segments of two different strains.</text>
</comment>
<comment type="similarity">
    <text evidence="1">Belongs to the glycosyl hydrolase 34 family.</text>
</comment>
<name>NRAM_I59A0</name>
<reference key="1">
    <citation type="submission" date="2001-10" db="EMBL/GenBank/DDBJ databases">
        <title>Characterization of avian influenza viruses isolated from wild birds and sentinel ducks during the winter seasons 2000-2001 and 2001-2002 in France.</title>
        <authorList>
            <person name="Rousset J.A.F."/>
            <person name="Louboutin K."/>
            <person name="Beven V."/>
            <person name="de Boisseson C."/>
            <person name="Bureau E."/>
            <person name="Hars J."/>
            <person name="Jestin V."/>
        </authorList>
    </citation>
    <scope>NUCLEOTIDE SEQUENCE [MRNA]</scope>
</reference>
<reference key="2">
    <citation type="journal article" date="2006" name="Science">
        <title>Large-scale sequence analysis of avian influenza isolates.</title>
        <authorList>
            <person name="Obenauer J.C."/>
            <person name="Denson J."/>
            <person name="Mehta P.K."/>
            <person name="Su X."/>
            <person name="Mukatira S."/>
            <person name="Finkelstein D.B."/>
            <person name="Xu X."/>
            <person name="Wang J."/>
            <person name="Ma J."/>
            <person name="Fan Y."/>
            <person name="Rakestraw K.M."/>
            <person name="Webster R.G."/>
            <person name="Hoffmann E."/>
            <person name="Krauss S."/>
            <person name="Zheng J."/>
            <person name="Zhang Z."/>
            <person name="Naeve C.W."/>
        </authorList>
    </citation>
    <scope>NUCLEOTIDE SEQUENCE [GENOMIC RNA]</scope>
</reference>
<reference key="3">
    <citation type="journal article" date="2004" name="Virus Res.">
        <title>Assembly and budding of influenza virus.</title>
        <authorList>
            <person name="Nayak D.P."/>
            <person name="Hui E.K."/>
            <person name="Barman S."/>
        </authorList>
    </citation>
    <scope>REVIEW</scope>
</reference>
<reference key="4">
    <citation type="journal article" date="2005" name="N. Engl. J. Med.">
        <title>Neuraminidase inhibitors for influenza.</title>
        <authorList>
            <person name="Moscona A."/>
        </authorList>
    </citation>
    <scope>REVIEW</scope>
</reference>
<reference key="5">
    <citation type="journal article" date="2005" name="Biol. Pharm. Bull.">
        <title>Sialobiology of influenza: molecular mechanism of host range variation of influenza viruses.</title>
        <authorList>
            <person name="Suzuki Y."/>
        </authorList>
    </citation>
    <scope>REVIEW</scope>
</reference>
<proteinExistence type="evidence at transcript level"/>
<accession>Q710U6</accession>
<accession>Q0A2H3</accession>